<accession>C5IGN8</accession>
<dbReference type="EMBL" id="FJ917746">
    <property type="protein sequence ID" value="ACR15168.1"/>
    <property type="molecule type" value="mRNA"/>
</dbReference>
<dbReference type="SMR" id="C5IGN8"/>
<dbReference type="GO" id="GO:0016020">
    <property type="term" value="C:membrane"/>
    <property type="evidence" value="ECO:0007669"/>
    <property type="project" value="UniProtKB-SubCell"/>
</dbReference>
<dbReference type="Gene3D" id="2.60.40.770">
    <property type="match status" value="1"/>
</dbReference>
<dbReference type="InterPro" id="IPR014756">
    <property type="entry name" value="Ig_E-set"/>
</dbReference>
<dbReference type="InterPro" id="IPR003172">
    <property type="entry name" value="ML_dom"/>
</dbReference>
<dbReference type="Pfam" id="PF02221">
    <property type="entry name" value="E1_DerP2_DerF2"/>
    <property type="match status" value="1"/>
</dbReference>
<dbReference type="SUPFAM" id="SSF81296">
    <property type="entry name" value="E set domains"/>
    <property type="match status" value="1"/>
</dbReference>
<proteinExistence type="evidence at protein level"/>
<feature type="signal peptide" evidence="1">
    <location>
        <begin position="1"/>
        <end position="19"/>
    </location>
</feature>
<feature type="chain" id="PRO_0000409665" description="Serine/arginine-rich protein PSR" evidence="1">
    <location>
        <begin position="20"/>
        <end position="497"/>
    </location>
</feature>
<feature type="topological domain" description="Extracellular" evidence="1">
    <location>
        <begin position="20"/>
        <end position="366"/>
    </location>
</feature>
<feature type="transmembrane region" description="Helical" evidence="1">
    <location>
        <begin position="367"/>
        <end position="387"/>
    </location>
</feature>
<feature type="topological domain" description="Cytoplasmic" evidence="1">
    <location>
        <begin position="388"/>
        <end position="497"/>
    </location>
</feature>
<feature type="region of interest" description="Necessary for phosphorylation by PSRPK in vitro" evidence="3">
    <location>
        <begin position="424"/>
        <end position="450"/>
    </location>
</feature>
<feature type="region of interest" description="Disordered" evidence="2">
    <location>
        <begin position="436"/>
        <end position="497"/>
    </location>
</feature>
<feature type="compositionally biased region" description="Acidic residues" evidence="2">
    <location>
        <begin position="436"/>
        <end position="447"/>
    </location>
</feature>
<feature type="compositionally biased region" description="Basic residues" evidence="2">
    <location>
        <begin position="459"/>
        <end position="471"/>
    </location>
</feature>
<feature type="compositionally biased region" description="Basic and acidic residues" evidence="2">
    <location>
        <begin position="476"/>
        <end position="497"/>
    </location>
</feature>
<feature type="glycosylation site" description="N-linked (GlcNAc...) asparagine" evidence="1">
    <location>
        <position position="92"/>
    </location>
</feature>
<feature type="glycosylation site" description="N-linked (GlcNAc...) asparagine" evidence="1">
    <location>
        <position position="193"/>
    </location>
</feature>
<feature type="glycosylation site" description="N-linked (GlcNAc...) asparagine" evidence="1">
    <location>
        <position position="202"/>
    </location>
</feature>
<feature type="glycosylation site" description="N-linked (GlcNAc...) asparagine" evidence="1">
    <location>
        <position position="261"/>
    </location>
</feature>
<feature type="glycosylation site" description="N-linked (GlcNAc...) asparagine" evidence="1">
    <location>
        <position position="283"/>
    </location>
</feature>
<feature type="mutagenesis site" description="Reduced phosphorylation by PSRPK." evidence="3">
    <original>R</original>
    <variation>K</variation>
    <location>
        <position position="464"/>
    </location>
</feature>
<feature type="mutagenesis site" description="Reduced phosphorylation by PSRPK." evidence="3">
    <original>S</original>
    <variation>T</variation>
    <location>
        <position position="465"/>
    </location>
</feature>
<sequence length="497" mass="53530">MYSRCIALVFVGLLASSLAANCYGPAGKLAVAEFDAFPSPVAVGGTVYIRTNIQPTYDMGSATVQLSVYYSDNFDVTGLKPVVDIPGLQLCNLSTSITCPITAGTHILAWEYRVPDVLPGTYQVKYTILEDNPPDGNPYSCIQFSITVEGQKTNEFTSWYQATLLGTALFTQPDYKLRQIGEALQVGPSGPLNGSISPVPYNGSIKYLSGSGDLVPNAFYDTSNFVWGLSGTMVKQTIGALGQISHIYQGECYLGYINNINTSIAGNFYDYMTPLIDGTFTLNWTYTDSSTAEINGVAQFQPAATIPYGWGFPLLYGRLGEHQVVTSDVGFLMIKGNMPFCTSGVCAAPPAQGGSKHHGLSSQKLGLAIGLPIAGVFLIILIAAAIIYYRKRRESEKEDGVFAVSRKPEYGSALVVDGIIEETMGSKTMQAMLDMRDDDESEHDSDDGYGRSGQSGRSGRSRSRSRSRSVSRSRSGSRDARSESDPGESASRDSDSD</sequence>
<comment type="subcellular location">
    <subcellularLocation>
        <location evidence="1">Membrane</location>
        <topology evidence="1">Single-pass type I membrane protein</topology>
    </subcellularLocation>
</comment>
<comment type="PTM">
    <text evidence="3">Phosphorylated on serine residues in the RS domain by PSRPK.</text>
</comment>
<organism>
    <name type="scientific">Physarum polycephalum</name>
    <name type="common">Slime mold</name>
    <dbReference type="NCBI Taxonomy" id="5791"/>
    <lineage>
        <taxon>Eukaryota</taxon>
        <taxon>Amoebozoa</taxon>
        <taxon>Evosea</taxon>
        <taxon>Eumycetozoa</taxon>
        <taxon>Myxogastria</taxon>
        <taxon>Myxogastromycetidae</taxon>
        <taxon>Physariida</taxon>
        <taxon>Physaraceae</taxon>
        <taxon>Physarum</taxon>
    </lineage>
</organism>
<reference evidence="5 6" key="1">
    <citation type="journal article" date="2011" name="J. Biochem.">
        <title>Identification of a novel PSR as the substrate of an SR protein kinase in the true slime mold.</title>
        <authorList>
            <person name="Zhang Y.X."/>
            <person name="Xing M."/>
            <person name="Fei X."/>
            <person name="Zhang J.H."/>
            <person name="Tian S.L."/>
            <person name="Li M.H."/>
            <person name="Liu S.D."/>
        </authorList>
    </citation>
    <scope>NUCLEOTIDE SEQUENCE [MRNA]</scope>
    <scope>PHOSPHORYLATION</scope>
    <scope>MUTAGENESIS OF ARG-464 AND SER-465</scope>
    <source>
        <strain evidence="3">TU291</strain>
    </source>
</reference>
<evidence type="ECO:0000255" key="1"/>
<evidence type="ECO:0000256" key="2">
    <source>
        <dbReference type="SAM" id="MobiDB-lite"/>
    </source>
</evidence>
<evidence type="ECO:0000269" key="3">
    <source>
    </source>
</evidence>
<evidence type="ECO:0000303" key="4">
    <source>
    </source>
</evidence>
<evidence type="ECO:0000305" key="5"/>
<evidence type="ECO:0000312" key="6">
    <source>
        <dbReference type="EMBL" id="ACR15168.1"/>
    </source>
</evidence>
<name>SRRDP_PHYPO</name>
<protein>
    <recommendedName>
        <fullName evidence="4">Serine/arginine-rich protein PSR</fullName>
    </recommendedName>
</protein>
<keyword id="KW-0325">Glycoprotein</keyword>
<keyword id="KW-0472">Membrane</keyword>
<keyword id="KW-0597">Phosphoprotein</keyword>
<keyword id="KW-0732">Signal</keyword>
<keyword id="KW-0812">Transmembrane</keyword>
<keyword id="KW-1133">Transmembrane helix</keyword>